<sequence length="87" mass="10036">MADRNQRKVYTGRVVSDKMDKTITVVVETYKKHGLYGKRVKYSKKFKAHDENNIAKTGDVVRISETRPLSATKHFRLLEVVEEAVII</sequence>
<dbReference type="EMBL" id="CP001175">
    <property type="protein sequence ID" value="ACK41242.1"/>
    <property type="molecule type" value="Genomic_DNA"/>
</dbReference>
<dbReference type="RefSeq" id="WP_003720941.1">
    <property type="nucleotide sequence ID" value="NC_011660.1"/>
</dbReference>
<dbReference type="SMR" id="B8DB17"/>
<dbReference type="GeneID" id="93240504"/>
<dbReference type="KEGG" id="lmh:LMHCC_2911"/>
<dbReference type="HOGENOM" id="CLU_073626_1_0_9"/>
<dbReference type="GO" id="GO:0022627">
    <property type="term" value="C:cytosolic small ribosomal subunit"/>
    <property type="evidence" value="ECO:0007669"/>
    <property type="project" value="TreeGrafter"/>
</dbReference>
<dbReference type="GO" id="GO:0019843">
    <property type="term" value="F:rRNA binding"/>
    <property type="evidence" value="ECO:0007669"/>
    <property type="project" value="UniProtKB-UniRule"/>
</dbReference>
<dbReference type="GO" id="GO:0003735">
    <property type="term" value="F:structural constituent of ribosome"/>
    <property type="evidence" value="ECO:0007669"/>
    <property type="project" value="InterPro"/>
</dbReference>
<dbReference type="GO" id="GO:0006412">
    <property type="term" value="P:translation"/>
    <property type="evidence" value="ECO:0007669"/>
    <property type="project" value="UniProtKB-UniRule"/>
</dbReference>
<dbReference type="CDD" id="cd00364">
    <property type="entry name" value="Ribosomal_uS17"/>
    <property type="match status" value="1"/>
</dbReference>
<dbReference type="FunFam" id="2.40.50.140:FF:000026">
    <property type="entry name" value="30S ribosomal protein S17"/>
    <property type="match status" value="1"/>
</dbReference>
<dbReference type="Gene3D" id="2.40.50.140">
    <property type="entry name" value="Nucleic acid-binding proteins"/>
    <property type="match status" value="1"/>
</dbReference>
<dbReference type="HAMAP" id="MF_01345_B">
    <property type="entry name" value="Ribosomal_uS17_B"/>
    <property type="match status" value="1"/>
</dbReference>
<dbReference type="InterPro" id="IPR012340">
    <property type="entry name" value="NA-bd_OB-fold"/>
</dbReference>
<dbReference type="InterPro" id="IPR000266">
    <property type="entry name" value="Ribosomal_uS17"/>
</dbReference>
<dbReference type="InterPro" id="IPR019984">
    <property type="entry name" value="Ribosomal_uS17_bact/chlr"/>
</dbReference>
<dbReference type="InterPro" id="IPR019979">
    <property type="entry name" value="Ribosomal_uS17_CS"/>
</dbReference>
<dbReference type="NCBIfam" id="NF004123">
    <property type="entry name" value="PRK05610.1"/>
    <property type="match status" value="1"/>
</dbReference>
<dbReference type="NCBIfam" id="TIGR03635">
    <property type="entry name" value="uS17_bact"/>
    <property type="match status" value="1"/>
</dbReference>
<dbReference type="PANTHER" id="PTHR10744">
    <property type="entry name" value="40S RIBOSOMAL PROTEIN S11 FAMILY MEMBER"/>
    <property type="match status" value="1"/>
</dbReference>
<dbReference type="PANTHER" id="PTHR10744:SF1">
    <property type="entry name" value="SMALL RIBOSOMAL SUBUNIT PROTEIN US17M"/>
    <property type="match status" value="1"/>
</dbReference>
<dbReference type="Pfam" id="PF00366">
    <property type="entry name" value="Ribosomal_S17"/>
    <property type="match status" value="1"/>
</dbReference>
<dbReference type="PRINTS" id="PR00973">
    <property type="entry name" value="RIBOSOMALS17"/>
</dbReference>
<dbReference type="SUPFAM" id="SSF50249">
    <property type="entry name" value="Nucleic acid-binding proteins"/>
    <property type="match status" value="1"/>
</dbReference>
<dbReference type="PROSITE" id="PS00056">
    <property type="entry name" value="RIBOSOMAL_S17"/>
    <property type="match status" value="1"/>
</dbReference>
<feature type="chain" id="PRO_1000166484" description="Small ribosomal subunit protein uS17">
    <location>
        <begin position="1"/>
        <end position="87"/>
    </location>
</feature>
<accession>B8DB17</accession>
<organism>
    <name type="scientific">Listeria monocytogenes serotype 4a (strain HCC23)</name>
    <dbReference type="NCBI Taxonomy" id="552536"/>
    <lineage>
        <taxon>Bacteria</taxon>
        <taxon>Bacillati</taxon>
        <taxon>Bacillota</taxon>
        <taxon>Bacilli</taxon>
        <taxon>Bacillales</taxon>
        <taxon>Listeriaceae</taxon>
        <taxon>Listeria</taxon>
    </lineage>
</organism>
<protein>
    <recommendedName>
        <fullName evidence="1">Small ribosomal subunit protein uS17</fullName>
    </recommendedName>
    <alternativeName>
        <fullName evidence="2">30S ribosomal protein S17</fullName>
    </alternativeName>
</protein>
<reference key="1">
    <citation type="journal article" date="2011" name="J. Bacteriol.">
        <title>Genome sequence of lineage III Listeria monocytogenes strain HCC23.</title>
        <authorList>
            <person name="Steele C.L."/>
            <person name="Donaldson J.R."/>
            <person name="Paul D."/>
            <person name="Banes M.M."/>
            <person name="Arick T."/>
            <person name="Bridges S.M."/>
            <person name="Lawrence M.L."/>
        </authorList>
    </citation>
    <scope>NUCLEOTIDE SEQUENCE [LARGE SCALE GENOMIC DNA]</scope>
    <source>
        <strain>HCC23</strain>
    </source>
</reference>
<keyword id="KW-0687">Ribonucleoprotein</keyword>
<keyword id="KW-0689">Ribosomal protein</keyword>
<keyword id="KW-0694">RNA-binding</keyword>
<keyword id="KW-0699">rRNA-binding</keyword>
<evidence type="ECO:0000255" key="1">
    <source>
        <dbReference type="HAMAP-Rule" id="MF_01345"/>
    </source>
</evidence>
<evidence type="ECO:0000305" key="2"/>
<comment type="function">
    <text evidence="1">One of the primary rRNA binding proteins, it binds specifically to the 5'-end of 16S ribosomal RNA.</text>
</comment>
<comment type="subunit">
    <text evidence="1">Part of the 30S ribosomal subunit.</text>
</comment>
<comment type="similarity">
    <text evidence="1">Belongs to the universal ribosomal protein uS17 family.</text>
</comment>
<proteinExistence type="inferred from homology"/>
<name>RS17_LISMH</name>
<gene>
    <name evidence="1" type="primary">rpsQ</name>
    <name type="ordered locus">LMHCC_2911</name>
</gene>